<sequence length="875" mass="100395">MSGSLSRGNGGKKVLNKNQLLKRNRIRNARSIRAEAVAASSTKTGTPSDLSESGSKLNVDQFISSRQFEVKQLQLAMHNSKAASSTRIFQALPRKLRRRTASHNVRRIPKRMRNRALREMRKSDQQDVLKGSSASSRKAHGLNAKQLYKARMSIKLLRLASKSTSMKLSMPPEVTSSNCHVRQKIKTLKRMIKESSTANPNIKLLNNRMGSYDCTGVNELAPIPKGRVKYTKRQKHFAWLPTHIWNAKRSHMMKRWGYQMVWAPTQKCFKLTHRLGGDTCSSDGALCMDSSYIGTIIVKDKSNDSEGDFLKSIIGKLTAERANLRKYREGQVLFQGLIYSFNEENGEDSTKPLGPCDVFWVQKDTAIIRLHPSIYTQVFNILLQHKEKLTVQDCRYSLASVTLKGAKALESLASCLRSTEYSKSFEQFKMVSMITDHNALPQRCTFAFEAIDPRHLAAPKKLNDSQRKTVNSDDILSLHENYPQDEINAVFNELCDPESRTQSYNNQNTLKEISARRYKLLTATPNSINKTTVPFKESDDPSIPLVIIRRLKTRDWIVVLPWFWLLPLWHLLNRIPRMYHIGLRQFQQIQYENKQLYFPDDYPFTQLGYIENSFYKKEASKTKWDRKPMGKRINFEKIKDIHNTKLPAYSGEIGDFFSSDWRFLQILRNGIDYLQRNDKTLELMDSKKTGQFNAQGVRDINCVNDVLEFCKDYEAKTKAMSLSIEENIPVALCKNRKCQFRTPDSISVNSSSFSLTFFPRCIIAVSCTLLERGHPKDNARIYQVPEKDLEHWLQLAKGVYRPNGRKDHDLKIPLPEVHDLIGFITSGTYHLNCGNGMGIGFIDHHAAIRQPTRYVLIRNVGTNTYRLGEWSKISV</sequence>
<feature type="chain" id="PRO_0000058514" description="Ribonucleases P/MRP protein subunit POP1">
    <location>
        <begin position="1"/>
        <end position="875"/>
    </location>
</feature>
<feature type="region of interest" description="Disordered" evidence="1">
    <location>
        <begin position="1"/>
        <end position="20"/>
    </location>
</feature>
<feature type="region of interest" description="Disordered" evidence="1">
    <location>
        <begin position="35"/>
        <end position="54"/>
    </location>
</feature>
<feature type="region of interest" description="Disordered" evidence="1">
    <location>
        <begin position="119"/>
        <end position="140"/>
    </location>
</feature>
<feature type="compositionally biased region" description="Polar residues" evidence="1">
    <location>
        <begin position="39"/>
        <end position="54"/>
    </location>
</feature>
<feature type="modified residue" description="Phosphothreonine" evidence="7">
    <location>
        <position position="524"/>
    </location>
</feature>
<feature type="strand" evidence="11">
    <location>
        <begin position="48"/>
        <end position="50"/>
    </location>
</feature>
<feature type="strand" evidence="11">
    <location>
        <begin position="55"/>
        <end position="58"/>
    </location>
</feature>
<feature type="helix" evidence="11">
    <location>
        <begin position="59"/>
        <end position="65"/>
    </location>
</feature>
<feature type="helix" evidence="11">
    <location>
        <begin position="68"/>
        <end position="77"/>
    </location>
</feature>
<feature type="strand" evidence="11">
    <location>
        <begin position="79"/>
        <end position="84"/>
    </location>
</feature>
<feature type="helix" evidence="8">
    <location>
        <begin position="89"/>
        <end position="91"/>
    </location>
</feature>
<feature type="turn" evidence="11">
    <location>
        <begin position="94"/>
        <end position="96"/>
    </location>
</feature>
<feature type="helix" evidence="8">
    <location>
        <begin position="100"/>
        <end position="102"/>
    </location>
</feature>
<feature type="helix" evidence="9">
    <location>
        <begin position="105"/>
        <end position="107"/>
    </location>
</feature>
<feature type="helix" evidence="11">
    <location>
        <begin position="110"/>
        <end position="121"/>
    </location>
</feature>
<feature type="helix" evidence="11">
    <location>
        <begin position="144"/>
        <end position="162"/>
    </location>
</feature>
<feature type="helix" evidence="11">
    <location>
        <begin position="164"/>
        <end position="169"/>
    </location>
</feature>
<feature type="helix" evidence="11">
    <location>
        <begin position="176"/>
        <end position="179"/>
    </location>
</feature>
<feature type="helix" evidence="11">
    <location>
        <begin position="181"/>
        <end position="194"/>
    </location>
</feature>
<feature type="turn" evidence="11">
    <location>
        <begin position="200"/>
        <end position="202"/>
    </location>
</feature>
<feature type="strand" evidence="11">
    <location>
        <begin position="206"/>
        <end position="209"/>
    </location>
</feature>
<feature type="strand" evidence="12">
    <location>
        <begin position="217"/>
        <end position="219"/>
    </location>
</feature>
<feature type="helix" evidence="11">
    <location>
        <begin position="228"/>
        <end position="234"/>
    </location>
</feature>
<feature type="strand" evidence="11">
    <location>
        <begin position="235"/>
        <end position="238"/>
    </location>
</feature>
<feature type="helix" evidence="11">
    <location>
        <begin position="243"/>
        <end position="249"/>
    </location>
</feature>
<feature type="strand" evidence="11">
    <location>
        <begin position="250"/>
        <end position="254"/>
    </location>
</feature>
<feature type="strand" evidence="11">
    <location>
        <begin position="256"/>
        <end position="266"/>
    </location>
</feature>
<feature type="helix" evidence="11">
    <location>
        <begin position="269"/>
        <end position="276"/>
    </location>
</feature>
<feature type="strand" evidence="8">
    <location>
        <begin position="277"/>
        <end position="280"/>
    </location>
</feature>
<feature type="strand" evidence="11">
    <location>
        <begin position="284"/>
        <end position="289"/>
    </location>
</feature>
<feature type="strand" evidence="11">
    <location>
        <begin position="293"/>
        <end position="299"/>
    </location>
</feature>
<feature type="strand" evidence="8">
    <location>
        <begin position="304"/>
        <end position="306"/>
    </location>
</feature>
<feature type="helix" evidence="11">
    <location>
        <begin position="308"/>
        <end position="317"/>
    </location>
</feature>
<feature type="turn" evidence="11">
    <location>
        <begin position="320"/>
        <end position="322"/>
    </location>
</feature>
<feature type="helix" evidence="11">
    <location>
        <begin position="325"/>
        <end position="329"/>
    </location>
</feature>
<feature type="strand" evidence="11">
    <location>
        <begin position="334"/>
        <end position="346"/>
    </location>
</feature>
<feature type="strand" evidence="11">
    <location>
        <begin position="348"/>
        <end position="361"/>
    </location>
</feature>
<feature type="turn" evidence="11">
    <location>
        <begin position="362"/>
        <end position="364"/>
    </location>
</feature>
<feature type="strand" evidence="11">
    <location>
        <begin position="365"/>
        <end position="370"/>
    </location>
</feature>
<feature type="helix" evidence="11">
    <location>
        <begin position="372"/>
        <end position="383"/>
    </location>
</feature>
<feature type="turn" evidence="10">
    <location>
        <begin position="386"/>
        <end position="388"/>
    </location>
</feature>
<feature type="strand" evidence="11">
    <location>
        <begin position="390"/>
        <end position="407"/>
    </location>
</feature>
<feature type="helix" evidence="11">
    <location>
        <begin position="408"/>
        <end position="415"/>
    </location>
</feature>
<feature type="strand" evidence="11">
    <location>
        <begin position="418"/>
        <end position="420"/>
    </location>
</feature>
<feature type="helix" evidence="11">
    <location>
        <begin position="423"/>
        <end position="431"/>
    </location>
</feature>
<feature type="turn" evidence="12">
    <location>
        <begin position="432"/>
        <end position="434"/>
    </location>
</feature>
<feature type="turn" evidence="11">
    <location>
        <begin position="437"/>
        <end position="439"/>
    </location>
</feature>
<feature type="strand" evidence="11">
    <location>
        <begin position="445"/>
        <end position="450"/>
    </location>
</feature>
<feature type="helix" evidence="11">
    <location>
        <begin position="453"/>
        <end position="455"/>
    </location>
</feature>
<feature type="strand" evidence="10">
    <location>
        <begin position="456"/>
        <end position="458"/>
    </location>
</feature>
<feature type="strand" evidence="11">
    <location>
        <begin position="465"/>
        <end position="468"/>
    </location>
</feature>
<feature type="helix" evidence="11">
    <location>
        <begin position="472"/>
        <end position="478"/>
    </location>
</feature>
<feature type="helix" evidence="11">
    <location>
        <begin position="484"/>
        <end position="495"/>
    </location>
</feature>
<feature type="helix" evidence="11">
    <location>
        <begin position="497"/>
        <end position="502"/>
    </location>
</feature>
<feature type="turn" evidence="10">
    <location>
        <begin position="503"/>
        <end position="506"/>
    </location>
</feature>
<feature type="helix" evidence="11">
    <location>
        <begin position="510"/>
        <end position="519"/>
    </location>
</feature>
<feature type="strand" evidence="11">
    <location>
        <begin position="537"/>
        <end position="540"/>
    </location>
</feature>
<feature type="strand" evidence="11">
    <location>
        <begin position="543"/>
        <end position="549"/>
    </location>
</feature>
<feature type="strand" evidence="11">
    <location>
        <begin position="551"/>
        <end position="553"/>
    </location>
</feature>
<feature type="strand" evidence="11">
    <location>
        <begin position="556"/>
        <end position="561"/>
    </location>
</feature>
<feature type="turn" evidence="11">
    <location>
        <begin position="562"/>
        <end position="564"/>
    </location>
</feature>
<feature type="helix" evidence="11">
    <location>
        <begin position="565"/>
        <end position="573"/>
    </location>
</feature>
<feature type="strand" evidence="11">
    <location>
        <begin position="578"/>
        <end position="580"/>
    </location>
</feature>
<feature type="helix" evidence="11">
    <location>
        <begin position="583"/>
        <end position="592"/>
    </location>
</feature>
<feature type="turn" evidence="11">
    <location>
        <begin position="598"/>
        <end position="601"/>
    </location>
</feature>
<feature type="helix" evidence="11">
    <location>
        <begin position="606"/>
        <end position="626"/>
    </location>
</feature>
<feature type="turn" evidence="8">
    <location>
        <begin position="629"/>
        <end position="631"/>
    </location>
</feature>
<feature type="strand" evidence="11">
    <location>
        <begin position="635"/>
        <end position="637"/>
    </location>
</feature>
<feature type="strand" evidence="11">
    <location>
        <begin position="640"/>
        <end position="644"/>
    </location>
</feature>
<feature type="turn" evidence="12">
    <location>
        <begin position="647"/>
        <end position="649"/>
    </location>
</feature>
<feature type="strand" evidence="11">
    <location>
        <begin position="656"/>
        <end position="658"/>
    </location>
</feature>
<feature type="helix" evidence="11">
    <location>
        <begin position="661"/>
        <end position="677"/>
    </location>
</feature>
<feature type="helix" evidence="11">
    <location>
        <begin position="703"/>
        <end position="717"/>
    </location>
</feature>
<feature type="helix" evidence="11">
    <location>
        <begin position="734"/>
        <end position="737"/>
    </location>
</feature>
<feature type="strand" evidence="11">
    <location>
        <begin position="755"/>
        <end position="758"/>
    </location>
</feature>
<feature type="strand" evidence="11">
    <location>
        <begin position="762"/>
        <end position="769"/>
    </location>
</feature>
<feature type="strand" evidence="11">
    <location>
        <begin position="777"/>
        <end position="783"/>
    </location>
</feature>
<feature type="strand" evidence="8">
    <location>
        <begin position="786"/>
        <end position="788"/>
    </location>
</feature>
<feature type="helix" evidence="11">
    <location>
        <begin position="790"/>
        <end position="797"/>
    </location>
</feature>
<feature type="strand" evidence="11">
    <location>
        <begin position="804"/>
        <end position="806"/>
    </location>
</feature>
<feature type="helix" evidence="10">
    <location>
        <begin position="817"/>
        <end position="819"/>
    </location>
</feature>
<feature type="strand" evidence="11">
    <location>
        <begin position="820"/>
        <end position="830"/>
    </location>
</feature>
<feature type="turn" evidence="11">
    <location>
        <begin position="831"/>
        <end position="834"/>
    </location>
</feature>
<feature type="strand" evidence="11">
    <location>
        <begin position="835"/>
        <end position="843"/>
    </location>
</feature>
<feature type="helix" evidence="11">
    <location>
        <begin position="844"/>
        <end position="849"/>
    </location>
</feature>
<feature type="strand" evidence="8">
    <location>
        <begin position="850"/>
        <end position="852"/>
    </location>
</feature>
<feature type="strand" evidence="11">
    <location>
        <begin position="854"/>
        <end position="858"/>
    </location>
</feature>
<feature type="strand" evidence="11">
    <location>
        <begin position="865"/>
        <end position="872"/>
    </location>
</feature>
<comment type="function">
    <text evidence="5 6">Required for processing of 5.8S rRNA (short form) at site A3 and for 5' and 3' processing of pre-tRNA.</text>
</comment>
<comment type="catalytic activity">
    <reaction>
        <text>Endonucleolytic cleavage of RNA, removing 5'-extranucleotides from tRNA precursor.</text>
        <dbReference type="EC" id="3.1.26.5"/>
    </reaction>
</comment>
<comment type="subunit">
    <text evidence="4 5 6">Component of nuclear RNase P and RNase MRP complexes. RNase P consists of an RNA moiety and at least 9 protein subunits including POP1, POP3, POP4, POP5, POP6, POP7, POP8, RPP1 and RPR2. RNase MRP complex consists of an RNA moiety and at least 10 protein subunits including POP1, POP3, POP4, POP5, POP6, POP7, POP8, RMP1, RPP1 and SNM1, many of which are shared with the RNase P complex.</text>
</comment>
<comment type="interaction">
    <interactant intactId="EBI-13621">
        <id>P41812</id>
    </interactant>
    <interactant intactId="EBI-13638">
        <id>P53833</id>
        <label>POP3</label>
    </interactant>
    <organismsDiffer>false</organismsDiffer>
    <experiments>5</experiments>
</comment>
<comment type="interaction">
    <interactant intactId="EBI-13621">
        <id>P41812</id>
    </interactant>
    <interactant intactId="EBI-13646">
        <id>P38336</id>
        <label>POP4</label>
    </interactant>
    <organismsDiffer>false</organismsDiffer>
    <experiments>6</experiments>
</comment>
<comment type="interaction">
    <interactant intactId="EBI-13621">
        <id>P41812</id>
    </interactant>
    <interactant intactId="EBI-13662">
        <id>P53218</id>
        <label>POP6</label>
    </interactant>
    <organismsDiffer>false</organismsDiffer>
    <experiments>6</experiments>
</comment>
<comment type="interaction">
    <interactant intactId="EBI-13621">
        <id>P41812</id>
    </interactant>
    <interactant intactId="EBI-13670">
        <id>P38291</id>
        <label>POP7</label>
    </interactant>
    <organismsDiffer>false</organismsDiffer>
    <experiments>5</experiments>
</comment>
<comment type="interaction">
    <interactant intactId="EBI-13621">
        <id>P41812</id>
    </interactant>
    <interactant intactId="EBI-15968">
        <id>P38786</id>
        <label>RPP1</label>
    </interactant>
    <organismsDiffer>false</organismsDiffer>
    <experiments>4</experiments>
</comment>
<comment type="interaction">
    <interactant intactId="EBI-13621">
        <id>P41812</id>
    </interactant>
    <interactant intactId="EBI-15622">
        <id>P40993</id>
        <label>SNM1</label>
    </interactant>
    <organismsDiffer>false</organismsDiffer>
    <experiments>5</experiments>
</comment>
<comment type="subcellular location">
    <subcellularLocation>
        <location evidence="2">Cytoplasm</location>
    </subcellularLocation>
    <subcellularLocation>
        <location evidence="2">Nucleus</location>
    </subcellularLocation>
</comment>
<comment type="miscellaneous">
    <text evidence="3">Present with 846 molecules/cell in log phase SD medium.</text>
</comment>
<proteinExistence type="evidence at protein level"/>
<gene>
    <name type="primary">POP1</name>
    <name type="ordered locus">YNL221C</name>
    <name type="ORF">N1285</name>
</gene>
<reference key="1">
    <citation type="journal article" date="1994" name="Genes Dev.">
        <title>The POP1 gene encodes a protein component common to the RNase MRP and RNase P ribonucleoproteins.</title>
        <authorList>
            <person name="Lygerou Z."/>
            <person name="Mitchell P."/>
            <person name="Petfalski E."/>
            <person name="Seraphin B."/>
            <person name="Tollervey D."/>
        </authorList>
    </citation>
    <scope>NUCLEOTIDE SEQUENCE [GENOMIC DNA]</scope>
    <scope>FUNCTION</scope>
    <scope>SUBUNIT</scope>
    <source>
        <strain>BSY295</strain>
    </source>
</reference>
<reference key="2">
    <citation type="journal article" date="1997" name="Nature">
        <title>The nucleotide sequence of Saccharomyces cerevisiae chromosome XIV and its evolutionary implications.</title>
        <authorList>
            <person name="Philippsen P."/>
            <person name="Kleine K."/>
            <person name="Poehlmann R."/>
            <person name="Duesterhoeft A."/>
            <person name="Hamberg K."/>
            <person name="Hegemann J.H."/>
            <person name="Obermaier B."/>
            <person name="Urrestarazu L.A."/>
            <person name="Aert R."/>
            <person name="Albermann K."/>
            <person name="Altmann R."/>
            <person name="Andre B."/>
            <person name="Baladron V."/>
            <person name="Ballesta J.P.G."/>
            <person name="Becam A.-M."/>
            <person name="Beinhauer J.D."/>
            <person name="Boskovic J."/>
            <person name="Buitrago M.J."/>
            <person name="Bussereau F."/>
            <person name="Coster F."/>
            <person name="Crouzet M."/>
            <person name="D'Angelo M."/>
            <person name="Dal Pero F."/>
            <person name="De Antoni A."/>
            <person name="del Rey F."/>
            <person name="Doignon F."/>
            <person name="Domdey H."/>
            <person name="Dubois E."/>
            <person name="Fiedler T.A."/>
            <person name="Fleig U."/>
            <person name="Floeth M."/>
            <person name="Fritz C."/>
            <person name="Gaillardin C."/>
            <person name="Garcia-Cantalejo J.M."/>
            <person name="Glansdorff N."/>
            <person name="Goffeau A."/>
            <person name="Gueldener U."/>
            <person name="Herbert C.J."/>
            <person name="Heumann K."/>
            <person name="Heuss-Neitzel D."/>
            <person name="Hilbert H."/>
            <person name="Hinni K."/>
            <person name="Iraqui Houssaini I."/>
            <person name="Jacquet M."/>
            <person name="Jimenez A."/>
            <person name="Jonniaux J.-L."/>
            <person name="Karpfinger-Hartl L."/>
            <person name="Lanfranchi G."/>
            <person name="Lepingle A."/>
            <person name="Levesque H."/>
            <person name="Lyck R."/>
            <person name="Maftahi M."/>
            <person name="Mallet L."/>
            <person name="Maurer C.T.C."/>
            <person name="Messenguy F."/>
            <person name="Mewes H.-W."/>
            <person name="Moestl D."/>
            <person name="Nasr F."/>
            <person name="Nicaud J.-M."/>
            <person name="Niedenthal R.K."/>
            <person name="Pandolfo D."/>
            <person name="Pierard A."/>
            <person name="Piravandi E."/>
            <person name="Planta R.J."/>
            <person name="Pohl T.M."/>
            <person name="Purnelle B."/>
            <person name="Rebischung C."/>
            <person name="Remacha M.A."/>
            <person name="Revuelta J.L."/>
            <person name="Rinke M."/>
            <person name="Saiz J.E."/>
            <person name="Sartorello F."/>
            <person name="Scherens B."/>
            <person name="Sen-Gupta M."/>
            <person name="Soler-Mira A."/>
            <person name="Urbanus J.H.M."/>
            <person name="Valle G."/>
            <person name="Van Dyck L."/>
            <person name="Verhasselt P."/>
            <person name="Vierendeels F."/>
            <person name="Vissers S."/>
            <person name="Voet M."/>
            <person name="Volckaert G."/>
            <person name="Wach A."/>
            <person name="Wambutt R."/>
            <person name="Wedler H."/>
            <person name="Zollner A."/>
            <person name="Hani J."/>
        </authorList>
    </citation>
    <scope>NUCLEOTIDE SEQUENCE [LARGE SCALE GENOMIC DNA]</scope>
    <source>
        <strain>ATCC 204508 / S288c</strain>
    </source>
</reference>
<reference key="3">
    <citation type="journal article" date="2014" name="G3 (Bethesda)">
        <title>The reference genome sequence of Saccharomyces cerevisiae: Then and now.</title>
        <authorList>
            <person name="Engel S.R."/>
            <person name="Dietrich F.S."/>
            <person name="Fisk D.G."/>
            <person name="Binkley G."/>
            <person name="Balakrishnan R."/>
            <person name="Costanzo M.C."/>
            <person name="Dwight S.S."/>
            <person name="Hitz B.C."/>
            <person name="Karra K."/>
            <person name="Nash R.S."/>
            <person name="Weng S."/>
            <person name="Wong E.D."/>
            <person name="Lloyd P."/>
            <person name="Skrzypek M.S."/>
            <person name="Miyasato S.R."/>
            <person name="Simison M."/>
            <person name="Cherry J.M."/>
        </authorList>
    </citation>
    <scope>GENOME REANNOTATION</scope>
    <source>
        <strain>ATCC 204508 / S288c</strain>
    </source>
</reference>
<reference key="4">
    <citation type="journal article" date="1998" name="Genes Dev.">
        <title>Purification and characterization of the nuclear RNase P holoenzyme complex reveals extensive subunit overlap with RNase MRP.</title>
        <authorList>
            <person name="Chamberlain J.R."/>
            <person name="Lee Y."/>
            <person name="Lane W.S."/>
            <person name="Engelke D.R."/>
        </authorList>
    </citation>
    <scope>FUNCTION</scope>
    <scope>IDENTIFICATION IN THE RNASE P COMPLEX BY MASS SPECTROMETRY</scope>
</reference>
<reference key="5">
    <citation type="journal article" date="2003" name="Mol. Cell">
        <title>Assigning function to yeast proteins by integration of technologies.</title>
        <authorList>
            <person name="Hazbun T.R."/>
            <person name="Malmstroem L."/>
            <person name="Anderson S."/>
            <person name="Graczyk B.J."/>
            <person name="Fox B."/>
            <person name="Riffle M."/>
            <person name="Sundin B.A."/>
            <person name="Aranda J.D."/>
            <person name="McDonald W.H."/>
            <person name="Chiu C.-H."/>
            <person name="Snydsman B.E."/>
            <person name="Bradley P."/>
            <person name="Muller E.G.D."/>
            <person name="Fields S."/>
            <person name="Baker D."/>
            <person name="Yates J.R. III"/>
            <person name="Davis T.N."/>
        </authorList>
    </citation>
    <scope>IDENTIFICATION BY MASS SPECTROMETRY</scope>
</reference>
<reference key="6">
    <citation type="journal article" date="2003" name="Nature">
        <title>Global analysis of protein localization in budding yeast.</title>
        <authorList>
            <person name="Huh W.-K."/>
            <person name="Falvo J.V."/>
            <person name="Gerke L.C."/>
            <person name="Carroll A.S."/>
            <person name="Howson R.W."/>
            <person name="Weissman J.S."/>
            <person name="O'Shea E.K."/>
        </authorList>
    </citation>
    <scope>SUBCELLULAR LOCATION [LARGE SCALE ANALYSIS]</scope>
</reference>
<reference key="7">
    <citation type="journal article" date="2003" name="Nature">
        <title>Global analysis of protein expression in yeast.</title>
        <authorList>
            <person name="Ghaemmaghami S."/>
            <person name="Huh W.-K."/>
            <person name="Bower K."/>
            <person name="Howson R.W."/>
            <person name="Belle A."/>
            <person name="Dephoure N."/>
            <person name="O'Shea E.K."/>
            <person name="Weissman J.S."/>
        </authorList>
    </citation>
    <scope>LEVEL OF PROTEIN EXPRESSION [LARGE SCALE ANALYSIS]</scope>
</reference>
<reference key="8">
    <citation type="journal article" date="2005" name="J. Biol. Chem.">
        <title>Characterization and purification of Saccharomyces cerevisiae RNase MRP reveals a new unique protein component.</title>
        <authorList>
            <person name="Salinas K."/>
            <person name="Wierzbicki S."/>
            <person name="Zhou L."/>
            <person name="Schmitt M.E."/>
        </authorList>
    </citation>
    <scope>IDENTIFICATION IN THE RNASE MRP COMPLEX BY MASS SPECTROMETRY</scope>
</reference>
<reference key="9">
    <citation type="journal article" date="2008" name="Mol. Cell. Proteomics">
        <title>A multidimensional chromatography technology for in-depth phosphoproteome analysis.</title>
        <authorList>
            <person name="Albuquerque C.P."/>
            <person name="Smolka M.B."/>
            <person name="Payne S.H."/>
            <person name="Bafna V."/>
            <person name="Eng J."/>
            <person name="Zhou H."/>
        </authorList>
    </citation>
    <scope>PHOSPHORYLATION [LARGE SCALE ANALYSIS] AT THR-524</scope>
    <scope>IDENTIFICATION BY MASS SPECTROMETRY [LARGE SCALE ANALYSIS]</scope>
</reference>
<dbReference type="EC" id="3.1.26.5"/>
<dbReference type="EMBL" id="X80358">
    <property type="protein sequence ID" value="CAA56589.1"/>
    <property type="molecule type" value="Genomic_DNA"/>
</dbReference>
<dbReference type="EMBL" id="Z71497">
    <property type="protein sequence ID" value="CAA96124.1"/>
    <property type="molecule type" value="Genomic_DNA"/>
</dbReference>
<dbReference type="EMBL" id="BK006947">
    <property type="protein sequence ID" value="DAA10335.1"/>
    <property type="molecule type" value="Genomic_DNA"/>
</dbReference>
<dbReference type="PIR" id="A53901">
    <property type="entry name" value="A53901"/>
</dbReference>
<dbReference type="RefSeq" id="NP_014178.1">
    <property type="nucleotide sequence ID" value="NM_001183059.1"/>
</dbReference>
<dbReference type="PDB" id="6AGB">
    <property type="method" value="EM"/>
    <property type="resolution" value="3.48 A"/>
    <property type="chains" value="B=1-875"/>
</dbReference>
<dbReference type="PDB" id="6AH3">
    <property type="method" value="EM"/>
    <property type="resolution" value="3.48 A"/>
    <property type="chains" value="B=1-875"/>
</dbReference>
<dbReference type="PDB" id="6W6V">
    <property type="method" value="EM"/>
    <property type="resolution" value="3.00 A"/>
    <property type="chains" value="B=1-875"/>
</dbReference>
<dbReference type="PDB" id="7C79">
    <property type="method" value="EM"/>
    <property type="resolution" value="2.50 A"/>
    <property type="chains" value="B=1-875"/>
</dbReference>
<dbReference type="PDB" id="7C7A">
    <property type="method" value="EM"/>
    <property type="resolution" value="2.80 A"/>
    <property type="chains" value="B=1-875"/>
</dbReference>
<dbReference type="PDBsum" id="6AGB"/>
<dbReference type="PDBsum" id="6AH3"/>
<dbReference type="PDBsum" id="6W6V"/>
<dbReference type="PDBsum" id="7C79"/>
<dbReference type="PDBsum" id="7C7A"/>
<dbReference type="EMDB" id="EMD-21564"/>
<dbReference type="EMDB" id="EMD-30296"/>
<dbReference type="EMDB" id="EMD-30297"/>
<dbReference type="EMDB" id="EMD-9616"/>
<dbReference type="EMDB" id="EMD-9622"/>
<dbReference type="SMR" id="P41812"/>
<dbReference type="BioGRID" id="35615">
    <property type="interactions" value="341"/>
</dbReference>
<dbReference type="ComplexPortal" id="CPX-1873">
    <property type="entry name" value="Nucleolar ribonuclease P complex"/>
</dbReference>
<dbReference type="ComplexPortal" id="CPX-3284">
    <property type="entry name" value="Nucleolar ribonuclease MRP complex"/>
</dbReference>
<dbReference type="DIP" id="DIP-4284N"/>
<dbReference type="FunCoup" id="P41812">
    <property type="interactions" value="166"/>
</dbReference>
<dbReference type="IntAct" id="P41812">
    <property type="interactions" value="13"/>
</dbReference>
<dbReference type="MINT" id="P41812"/>
<dbReference type="STRING" id="4932.YNL221C"/>
<dbReference type="iPTMnet" id="P41812"/>
<dbReference type="PaxDb" id="4932-YNL221C"/>
<dbReference type="PeptideAtlas" id="P41812"/>
<dbReference type="EnsemblFungi" id="YNL221C_mRNA">
    <property type="protein sequence ID" value="YNL221C"/>
    <property type="gene ID" value="YNL221C"/>
</dbReference>
<dbReference type="GeneID" id="855500"/>
<dbReference type="KEGG" id="sce:YNL221C"/>
<dbReference type="AGR" id="SGD:S000005165"/>
<dbReference type="SGD" id="S000005165">
    <property type="gene designation" value="POP1"/>
</dbReference>
<dbReference type="VEuPathDB" id="FungiDB:YNL221C"/>
<dbReference type="eggNOG" id="KOG3322">
    <property type="taxonomic scope" value="Eukaryota"/>
</dbReference>
<dbReference type="GeneTree" id="ENSGT00390000017478"/>
<dbReference type="HOGENOM" id="CLU_007205_0_1_1"/>
<dbReference type="InParanoid" id="P41812"/>
<dbReference type="OMA" id="WNAKRSH"/>
<dbReference type="OrthoDB" id="442863at2759"/>
<dbReference type="BioCyc" id="YEAST:YNL221C-MONOMER"/>
<dbReference type="BioGRID-ORCS" id="855500">
    <property type="hits" value="8 hits in 10 CRISPR screens"/>
</dbReference>
<dbReference type="PRO" id="PR:P41812"/>
<dbReference type="Proteomes" id="UP000002311">
    <property type="component" value="Chromosome XIV"/>
</dbReference>
<dbReference type="RNAct" id="P41812">
    <property type="molecule type" value="protein"/>
</dbReference>
<dbReference type="GO" id="GO:0005737">
    <property type="term" value="C:cytoplasm"/>
    <property type="evidence" value="ECO:0007669"/>
    <property type="project" value="UniProtKB-SubCell"/>
</dbReference>
<dbReference type="GO" id="GO:0005655">
    <property type="term" value="C:nucleolar ribonuclease P complex"/>
    <property type="evidence" value="ECO:0000314"/>
    <property type="project" value="SGD"/>
</dbReference>
<dbReference type="GO" id="GO:0000172">
    <property type="term" value="C:ribonuclease MRP complex"/>
    <property type="evidence" value="ECO:0000314"/>
    <property type="project" value="SGD"/>
</dbReference>
<dbReference type="GO" id="GO:0005697">
    <property type="term" value="C:telomerase holoenzyme complex"/>
    <property type="evidence" value="ECO:0000314"/>
    <property type="project" value="SGD"/>
</dbReference>
<dbReference type="GO" id="GO:0004526">
    <property type="term" value="F:ribonuclease P activity"/>
    <property type="evidence" value="ECO:0007669"/>
    <property type="project" value="UniProtKB-EC"/>
</dbReference>
<dbReference type="GO" id="GO:0003723">
    <property type="term" value="F:RNA binding"/>
    <property type="evidence" value="ECO:0000314"/>
    <property type="project" value="SGD"/>
</dbReference>
<dbReference type="GO" id="GO:0034965">
    <property type="term" value="P:intronic box C/D snoRNA processing"/>
    <property type="evidence" value="ECO:0000314"/>
    <property type="project" value="SGD"/>
</dbReference>
<dbReference type="GO" id="GO:0000460">
    <property type="term" value="P:maturation of 5.8S rRNA"/>
    <property type="evidence" value="ECO:0000314"/>
    <property type="project" value="ComplexPortal"/>
</dbReference>
<dbReference type="GO" id="GO:0000294">
    <property type="term" value="P:nuclear-transcribed mRNA catabolic process, RNase MRP-dependent"/>
    <property type="evidence" value="ECO:0000314"/>
    <property type="project" value="SGD"/>
</dbReference>
<dbReference type="GO" id="GO:0006364">
    <property type="term" value="P:rRNA processing"/>
    <property type="evidence" value="ECO:0000315"/>
    <property type="project" value="SGD"/>
</dbReference>
<dbReference type="GO" id="GO:0001682">
    <property type="term" value="P:tRNA 5'-leader removal"/>
    <property type="evidence" value="ECO:0000314"/>
    <property type="project" value="ComplexPortal"/>
</dbReference>
<dbReference type="GO" id="GO:0008033">
    <property type="term" value="P:tRNA processing"/>
    <property type="evidence" value="ECO:0000315"/>
    <property type="project" value="SGD"/>
</dbReference>
<dbReference type="InterPro" id="IPR039182">
    <property type="entry name" value="Pop1"/>
</dbReference>
<dbReference type="InterPro" id="IPR055079">
    <property type="entry name" value="POP1_C"/>
</dbReference>
<dbReference type="InterPro" id="IPR009723">
    <property type="entry name" value="Pop1_N"/>
</dbReference>
<dbReference type="InterPro" id="IPR012590">
    <property type="entry name" value="POPLD_dom"/>
</dbReference>
<dbReference type="PANTHER" id="PTHR22731">
    <property type="entry name" value="RIBONUCLEASES P/MRP PROTEIN SUBUNIT POP1"/>
    <property type="match status" value="1"/>
</dbReference>
<dbReference type="PANTHER" id="PTHR22731:SF3">
    <property type="entry name" value="RIBONUCLEASES P_MRP PROTEIN SUBUNIT POP1"/>
    <property type="match status" value="1"/>
</dbReference>
<dbReference type="Pfam" id="PF22770">
    <property type="entry name" value="POP1_C"/>
    <property type="match status" value="1"/>
</dbReference>
<dbReference type="Pfam" id="PF06978">
    <property type="entry name" value="POP1_N"/>
    <property type="match status" value="1"/>
</dbReference>
<dbReference type="Pfam" id="PF08170">
    <property type="entry name" value="POPLD"/>
    <property type="match status" value="1"/>
</dbReference>
<evidence type="ECO:0000256" key="1">
    <source>
        <dbReference type="SAM" id="MobiDB-lite"/>
    </source>
</evidence>
<evidence type="ECO:0000269" key="2">
    <source>
    </source>
</evidence>
<evidence type="ECO:0000269" key="3">
    <source>
    </source>
</evidence>
<evidence type="ECO:0000269" key="4">
    <source>
    </source>
</evidence>
<evidence type="ECO:0000269" key="5">
    <source>
    </source>
</evidence>
<evidence type="ECO:0000269" key="6">
    <source>
    </source>
</evidence>
<evidence type="ECO:0007744" key="7">
    <source>
    </source>
</evidence>
<evidence type="ECO:0007829" key="8">
    <source>
        <dbReference type="PDB" id="6AGB"/>
    </source>
</evidence>
<evidence type="ECO:0007829" key="9">
    <source>
        <dbReference type="PDB" id="6AH3"/>
    </source>
</evidence>
<evidence type="ECO:0007829" key="10">
    <source>
        <dbReference type="PDB" id="6W6V"/>
    </source>
</evidence>
<evidence type="ECO:0007829" key="11">
    <source>
        <dbReference type="PDB" id="7C79"/>
    </source>
</evidence>
<evidence type="ECO:0007829" key="12">
    <source>
        <dbReference type="PDB" id="7C7A"/>
    </source>
</evidence>
<protein>
    <recommendedName>
        <fullName>Ribonucleases P/MRP protein subunit POP1</fullName>
        <ecNumber>3.1.26.5</ecNumber>
    </recommendedName>
    <alternativeName>
        <fullName>RNA-processing protein POP1</fullName>
    </alternativeName>
    <alternativeName>
        <fullName>RNases P/MRP 100.4 kDa subunit</fullName>
    </alternativeName>
</protein>
<organism>
    <name type="scientific">Saccharomyces cerevisiae (strain ATCC 204508 / S288c)</name>
    <name type="common">Baker's yeast</name>
    <dbReference type="NCBI Taxonomy" id="559292"/>
    <lineage>
        <taxon>Eukaryota</taxon>
        <taxon>Fungi</taxon>
        <taxon>Dikarya</taxon>
        <taxon>Ascomycota</taxon>
        <taxon>Saccharomycotina</taxon>
        <taxon>Saccharomycetes</taxon>
        <taxon>Saccharomycetales</taxon>
        <taxon>Saccharomycetaceae</taxon>
        <taxon>Saccharomyces</taxon>
    </lineage>
</organism>
<keyword id="KW-0002">3D-structure</keyword>
<keyword id="KW-0963">Cytoplasm</keyword>
<keyword id="KW-0378">Hydrolase</keyword>
<keyword id="KW-0539">Nucleus</keyword>
<keyword id="KW-0597">Phosphoprotein</keyword>
<keyword id="KW-1185">Reference proteome</keyword>
<keyword id="KW-0698">rRNA processing</keyword>
<keyword id="KW-0819">tRNA processing</keyword>
<name>POP1_YEAST</name>
<accession>P41812</accession>
<accession>D6W0W9</accession>